<protein>
    <recommendedName>
        <fullName>cGMP-dependent protein kinase 2</fullName>
        <shortName>cGK 2</shortName>
        <shortName>cGK2</shortName>
        <ecNumber evidence="10">2.7.11.12</ecNumber>
    </recommendedName>
    <alternativeName>
        <fullName>cGMP-dependent protein kinase II</fullName>
        <shortName>cGKII</shortName>
    </alternativeName>
</protein>
<name>KGP2_RAT</name>
<proteinExistence type="evidence at protein level"/>
<reference key="1">
    <citation type="journal article" date="1994" name="Proc. Natl. Acad. Sci. U.S.A.">
        <title>Cloning, expression, and in situ localization of rat intestinal cGMP-dependent protein kinase II.</title>
        <authorList>
            <person name="Jarchau T."/>
            <person name="Haeusler C."/>
            <person name="Markert T."/>
            <person name="Poehler D."/>
            <person name="Vandekerckhove J."/>
            <person name="de Jonge H.R."/>
            <person name="Lohmann S.M."/>
            <person name="Walter U."/>
        </authorList>
    </citation>
    <scope>NUCLEOTIDE SEQUENCE [MRNA]</scope>
    <scope>TISSUE SPECIFICITY</scope>
    <source>
        <strain>Sprague-Dawley</strain>
        <tissue>Intestine</tissue>
    </source>
</reference>
<reference key="2">
    <citation type="journal article" date="1998" name="Proc. Natl. Acad. Sci. U.S.A.">
        <title>Membrane targeting of cGMP-dependent protein kinase is required for cystic fibrosis transmembrane conductance regulator Cl- channel activation.</title>
        <authorList>
            <person name="Vaandrager A.B."/>
            <person name="Smolenski A."/>
            <person name="Tilly B.C."/>
            <person name="Houtsmuller A.B."/>
            <person name="Ehlert E.M."/>
            <person name="Bot A.G."/>
            <person name="Edixhoven M."/>
            <person name="Boomaars W.E."/>
            <person name="Lohmann S.M."/>
            <person name="de Jonge H.R."/>
        </authorList>
    </citation>
    <scope>FUNCTION</scope>
    <scope>SUBCELLULAR LOCATION</scope>
    <scope>MUTAGENESIS OF GLY-2</scope>
</reference>
<reference key="3">
    <citation type="journal article" date="2005" name="Am. J. Physiol.">
        <title>STa and cGMP stimulate CFTR translocation to the surface of villus enterocytes in rat jejunum and is regulated by protein kinase G.</title>
        <authorList>
            <person name="Golin-Bisello F."/>
            <person name="Bradbury N."/>
            <person name="Ameen N."/>
        </authorList>
    </citation>
    <scope>FUNCTION</scope>
    <scope>ACTIVITY REGULATION</scope>
    <scope>TISSUE SPECIFICITY</scope>
</reference>
<reference key="4">
    <citation type="journal article" date="2007" name="Neuron">
        <title>A GluR1-cGKII interaction regulates AMPA receptor trafficking.</title>
        <authorList>
            <person name="Serulle Y."/>
            <person name="Zhang S."/>
            <person name="Ninan I."/>
            <person name="Puzzo D."/>
            <person name="McCarthy M."/>
            <person name="Khatri L."/>
            <person name="Arancio O."/>
            <person name="Ziff E.B."/>
        </authorList>
    </citation>
    <scope>FUNCTION</scope>
    <scope>CATALYTIC ACTIVITY</scope>
    <scope>INTERACTION WITH GRIA1/GLUR1</scope>
</reference>
<reference key="5">
    <citation type="journal article" date="2012" name="Nat. Commun.">
        <title>Quantitative maps of protein phosphorylation sites across 14 different rat organs and tissues.</title>
        <authorList>
            <person name="Lundby A."/>
            <person name="Secher A."/>
            <person name="Lage K."/>
            <person name="Nordsborg N.B."/>
            <person name="Dmytriyev A."/>
            <person name="Lundby C."/>
            <person name="Olsen J.V."/>
        </authorList>
    </citation>
    <scope>PHOSPHORYLATION [LARGE SCALE ANALYSIS] AT SER-110; SER-117 AND SER-431</scope>
    <scope>IDENTIFICATION BY MASS SPECTROMETRY [LARGE SCALE ANALYSIS]</scope>
</reference>
<reference key="6">
    <citation type="journal article" date="2014" name="J. Biol. Chem.">
        <title>Crystal structure of the cGMP-dependent protein kinase II leucine zipper and Rab11b protein complex reveals molecular details of G-kinase-specific interactions.</title>
        <authorList>
            <person name="Reger A.S."/>
            <person name="Yang M.P."/>
            <person name="Koide-Yoshida S."/>
            <person name="Guo E."/>
            <person name="Mehta S."/>
            <person name="Yuasa K."/>
            <person name="Liu A."/>
            <person name="Casteel D.E."/>
            <person name="Kim C."/>
        </authorList>
    </citation>
    <scope>X-RAY CRYSTALLOGRAPHY (2.66 ANGSTROMS) OF 40-83</scope>
</reference>
<dbReference type="EC" id="2.7.11.12" evidence="10"/>
<dbReference type="EMBL" id="Z36276">
    <property type="protein sequence ID" value="CAA85284.1"/>
    <property type="molecule type" value="mRNA"/>
</dbReference>
<dbReference type="PIR" id="I59329">
    <property type="entry name" value="I59329"/>
</dbReference>
<dbReference type="RefSeq" id="NP_037144.1">
    <property type="nucleotide sequence ID" value="NM_013012.2"/>
</dbReference>
<dbReference type="PDB" id="4OJK">
    <property type="method" value="X-ray"/>
    <property type="resolution" value="2.66 A"/>
    <property type="chains" value="C/D=40-83"/>
</dbReference>
<dbReference type="PDBsum" id="4OJK"/>
<dbReference type="SMR" id="Q64595"/>
<dbReference type="FunCoup" id="Q64595">
    <property type="interactions" value="1363"/>
</dbReference>
<dbReference type="STRING" id="10116.ENSRNOP00000003237"/>
<dbReference type="iPTMnet" id="Q64595"/>
<dbReference type="PhosphoSitePlus" id="Q64595"/>
<dbReference type="PaxDb" id="10116-ENSRNOP00000003237"/>
<dbReference type="Ensembl" id="ENSRNOT00000003237.5">
    <property type="protein sequence ID" value="ENSRNOP00000003237.2"/>
    <property type="gene ID" value="ENSRNOG00000002361.5"/>
</dbReference>
<dbReference type="GeneID" id="25523"/>
<dbReference type="KEGG" id="rno:25523"/>
<dbReference type="UCSC" id="RGD:3401">
    <property type="organism name" value="rat"/>
</dbReference>
<dbReference type="AGR" id="RGD:3401"/>
<dbReference type="CTD" id="5593"/>
<dbReference type="RGD" id="3401">
    <property type="gene designation" value="Prkg2"/>
</dbReference>
<dbReference type="eggNOG" id="KOG0614">
    <property type="taxonomic scope" value="Eukaryota"/>
</dbReference>
<dbReference type="GeneTree" id="ENSGT00940000159393"/>
<dbReference type="HOGENOM" id="CLU_000288_73_2_1"/>
<dbReference type="InParanoid" id="Q64595"/>
<dbReference type="OMA" id="YSYFDRY"/>
<dbReference type="OrthoDB" id="63267at2759"/>
<dbReference type="PhylomeDB" id="Q64595"/>
<dbReference type="TreeFam" id="TF313261"/>
<dbReference type="BRENDA" id="2.7.11.12">
    <property type="organism ID" value="5301"/>
</dbReference>
<dbReference type="Reactome" id="R-RNO-1474151">
    <property type="pathway name" value="Tetrahydrobiopterin (BH4) synthesis, recycling, salvage and regulation"/>
</dbReference>
<dbReference type="Reactome" id="R-RNO-418457">
    <property type="pathway name" value="cGMP effects"/>
</dbReference>
<dbReference type="Reactome" id="R-RNO-9648002">
    <property type="pathway name" value="RAS processing"/>
</dbReference>
<dbReference type="PRO" id="PR:Q64595"/>
<dbReference type="Proteomes" id="UP000002494">
    <property type="component" value="Chromosome 14"/>
</dbReference>
<dbReference type="Bgee" id="ENSRNOG00000002361">
    <property type="expression patterns" value="Expressed in jejunum and 8 other cell types or tissues"/>
</dbReference>
<dbReference type="GO" id="GO:0016324">
    <property type="term" value="C:apical plasma membrane"/>
    <property type="evidence" value="ECO:0007669"/>
    <property type="project" value="UniProtKB-SubCell"/>
</dbReference>
<dbReference type="GO" id="GO:0031965">
    <property type="term" value="C:nuclear membrane"/>
    <property type="evidence" value="ECO:0000314"/>
    <property type="project" value="RGD"/>
</dbReference>
<dbReference type="GO" id="GO:0005886">
    <property type="term" value="C:plasma membrane"/>
    <property type="evidence" value="ECO:0000266"/>
    <property type="project" value="RGD"/>
</dbReference>
<dbReference type="GO" id="GO:0005524">
    <property type="term" value="F:ATP binding"/>
    <property type="evidence" value="ECO:0007669"/>
    <property type="project" value="UniProtKB-KW"/>
</dbReference>
<dbReference type="GO" id="GO:0030553">
    <property type="term" value="F:cGMP binding"/>
    <property type="evidence" value="ECO:0007669"/>
    <property type="project" value="UniProtKB-KW"/>
</dbReference>
<dbReference type="GO" id="GO:0004692">
    <property type="term" value="F:cGMP-dependent protein kinase activity"/>
    <property type="evidence" value="ECO:0000314"/>
    <property type="project" value="RGD"/>
</dbReference>
<dbReference type="GO" id="GO:0042802">
    <property type="term" value="F:identical protein binding"/>
    <property type="evidence" value="ECO:0000353"/>
    <property type="project" value="RGD"/>
</dbReference>
<dbReference type="GO" id="GO:0051019">
    <property type="term" value="F:mitogen-activated protein kinase binding"/>
    <property type="evidence" value="ECO:0000250"/>
    <property type="project" value="UniProtKB"/>
</dbReference>
<dbReference type="GO" id="GO:0106310">
    <property type="term" value="F:protein serine kinase activity"/>
    <property type="evidence" value="ECO:0000250"/>
    <property type="project" value="UniProtKB"/>
</dbReference>
<dbReference type="GO" id="GO:0071476">
    <property type="term" value="P:cellular hypotonic response"/>
    <property type="evidence" value="ECO:0000266"/>
    <property type="project" value="RGD"/>
</dbReference>
<dbReference type="GO" id="GO:0032922">
    <property type="term" value="P:circadian regulation of gene expression"/>
    <property type="evidence" value="ECO:0000266"/>
    <property type="project" value="RGD"/>
</dbReference>
<dbReference type="GO" id="GO:0007623">
    <property type="term" value="P:circadian rhythm"/>
    <property type="evidence" value="ECO:0000266"/>
    <property type="project" value="RGD"/>
</dbReference>
<dbReference type="GO" id="GO:0045794">
    <property type="term" value="P:negative regulation of cell volume"/>
    <property type="evidence" value="ECO:0000266"/>
    <property type="project" value="RGD"/>
</dbReference>
<dbReference type="GO" id="GO:2001226">
    <property type="term" value="P:negative regulation of chloride transport"/>
    <property type="evidence" value="ECO:0000314"/>
    <property type="project" value="CAFA"/>
</dbReference>
<dbReference type="GO" id="GO:0032332">
    <property type="term" value="P:positive regulation of chondrocyte differentiation"/>
    <property type="evidence" value="ECO:0000316"/>
    <property type="project" value="RGD"/>
</dbReference>
<dbReference type="GO" id="GO:1903829">
    <property type="term" value="P:positive regulation of protein localization"/>
    <property type="evidence" value="ECO:0000316"/>
    <property type="project" value="RGD"/>
</dbReference>
<dbReference type="GO" id="GO:0072659">
    <property type="term" value="P:protein localization to plasma membrane"/>
    <property type="evidence" value="ECO:0000315"/>
    <property type="project" value="RGD"/>
</dbReference>
<dbReference type="GO" id="GO:0007165">
    <property type="term" value="P:signal transduction"/>
    <property type="evidence" value="ECO:0000266"/>
    <property type="project" value="RGD"/>
</dbReference>
<dbReference type="CDD" id="cd00038">
    <property type="entry name" value="CAP_ED"/>
    <property type="match status" value="2"/>
</dbReference>
<dbReference type="CDD" id="cd05572">
    <property type="entry name" value="STKc_cGK"/>
    <property type="match status" value="1"/>
</dbReference>
<dbReference type="FunFam" id="3.30.200.20:FF:000005">
    <property type="entry name" value="cAMP-dependent protein kinase catalytic subunit"/>
    <property type="match status" value="1"/>
</dbReference>
<dbReference type="FunFam" id="1.10.510.10:FF:000096">
    <property type="entry name" value="cGMP-dependent protein kinase"/>
    <property type="match status" value="1"/>
</dbReference>
<dbReference type="FunFam" id="2.60.120.10:FF:000038">
    <property type="entry name" value="cGMP-dependent protein kinase"/>
    <property type="match status" value="1"/>
</dbReference>
<dbReference type="FunFam" id="2.60.120.10:FF:000043">
    <property type="entry name" value="cGMP-dependent protein kinase"/>
    <property type="match status" value="1"/>
</dbReference>
<dbReference type="Gene3D" id="2.60.120.10">
    <property type="entry name" value="Jelly Rolls"/>
    <property type="match status" value="2"/>
</dbReference>
<dbReference type="Gene3D" id="3.30.200.20">
    <property type="entry name" value="Phosphorylase Kinase, domain 1"/>
    <property type="match status" value="1"/>
</dbReference>
<dbReference type="Gene3D" id="1.10.510.10">
    <property type="entry name" value="Transferase(Phosphotransferase) domain 1"/>
    <property type="match status" value="1"/>
</dbReference>
<dbReference type="InterPro" id="IPR000961">
    <property type="entry name" value="AGC-kinase_C"/>
</dbReference>
<dbReference type="InterPro" id="IPR002374">
    <property type="entry name" value="cGMP_dep_kinase"/>
</dbReference>
<dbReference type="InterPro" id="IPR018488">
    <property type="entry name" value="cNMP-bd_CS"/>
</dbReference>
<dbReference type="InterPro" id="IPR000595">
    <property type="entry name" value="cNMP-bd_dom"/>
</dbReference>
<dbReference type="InterPro" id="IPR018490">
    <property type="entry name" value="cNMP-bd_dom_sf"/>
</dbReference>
<dbReference type="InterPro" id="IPR011009">
    <property type="entry name" value="Kinase-like_dom_sf"/>
</dbReference>
<dbReference type="InterPro" id="IPR000719">
    <property type="entry name" value="Prot_kinase_dom"/>
</dbReference>
<dbReference type="InterPro" id="IPR017441">
    <property type="entry name" value="Protein_kinase_ATP_BS"/>
</dbReference>
<dbReference type="InterPro" id="IPR014710">
    <property type="entry name" value="RmlC-like_jellyroll"/>
</dbReference>
<dbReference type="InterPro" id="IPR008271">
    <property type="entry name" value="Ser/Thr_kinase_AS"/>
</dbReference>
<dbReference type="InterPro" id="IPR035014">
    <property type="entry name" value="STKc_cGK"/>
</dbReference>
<dbReference type="PANTHER" id="PTHR24353:SF24">
    <property type="match status" value="1"/>
</dbReference>
<dbReference type="PANTHER" id="PTHR24353">
    <property type="entry name" value="CYCLIC NUCLEOTIDE-DEPENDENT PROTEIN KINASE"/>
    <property type="match status" value="1"/>
</dbReference>
<dbReference type="Pfam" id="PF00027">
    <property type="entry name" value="cNMP_binding"/>
    <property type="match status" value="2"/>
</dbReference>
<dbReference type="Pfam" id="PF00069">
    <property type="entry name" value="Pkinase"/>
    <property type="match status" value="1"/>
</dbReference>
<dbReference type="PIRSF" id="PIRSF000559">
    <property type="entry name" value="cGMP-dep_kinase"/>
    <property type="match status" value="1"/>
</dbReference>
<dbReference type="PRINTS" id="PR00104">
    <property type="entry name" value="CGMPKINASE"/>
</dbReference>
<dbReference type="SMART" id="SM00100">
    <property type="entry name" value="cNMP"/>
    <property type="match status" value="2"/>
</dbReference>
<dbReference type="SMART" id="SM00133">
    <property type="entry name" value="S_TK_X"/>
    <property type="match status" value="1"/>
</dbReference>
<dbReference type="SMART" id="SM00220">
    <property type="entry name" value="S_TKc"/>
    <property type="match status" value="1"/>
</dbReference>
<dbReference type="SUPFAM" id="SSF51206">
    <property type="entry name" value="cAMP-binding domain-like"/>
    <property type="match status" value="2"/>
</dbReference>
<dbReference type="SUPFAM" id="SSF56112">
    <property type="entry name" value="Protein kinase-like (PK-like)"/>
    <property type="match status" value="1"/>
</dbReference>
<dbReference type="PROSITE" id="PS51285">
    <property type="entry name" value="AGC_KINASE_CTER"/>
    <property type="match status" value="1"/>
</dbReference>
<dbReference type="PROSITE" id="PS00888">
    <property type="entry name" value="CNMP_BINDING_1"/>
    <property type="match status" value="2"/>
</dbReference>
<dbReference type="PROSITE" id="PS00889">
    <property type="entry name" value="CNMP_BINDING_2"/>
    <property type="match status" value="2"/>
</dbReference>
<dbReference type="PROSITE" id="PS50042">
    <property type="entry name" value="CNMP_BINDING_3"/>
    <property type="match status" value="2"/>
</dbReference>
<dbReference type="PROSITE" id="PS00107">
    <property type="entry name" value="PROTEIN_KINASE_ATP"/>
    <property type="match status" value="1"/>
</dbReference>
<dbReference type="PROSITE" id="PS50011">
    <property type="entry name" value="PROTEIN_KINASE_DOM"/>
    <property type="match status" value="1"/>
</dbReference>
<dbReference type="PROSITE" id="PS00108">
    <property type="entry name" value="PROTEIN_KINASE_ST"/>
    <property type="match status" value="1"/>
</dbReference>
<gene>
    <name type="primary">Prkg2</name>
</gene>
<accession>Q64595</accession>
<keyword id="KW-0002">3D-structure</keyword>
<keyword id="KW-0067">ATP-binding</keyword>
<keyword id="KW-1003">Cell membrane</keyword>
<keyword id="KW-0140">cGMP</keyword>
<keyword id="KW-0142">cGMP-binding</keyword>
<keyword id="KW-0418">Kinase</keyword>
<keyword id="KW-0449">Lipoprotein</keyword>
<keyword id="KW-0472">Membrane</keyword>
<keyword id="KW-0519">Myristate</keyword>
<keyword id="KW-0547">Nucleotide-binding</keyword>
<keyword id="KW-0597">Phosphoprotein</keyword>
<keyword id="KW-1185">Reference proteome</keyword>
<keyword id="KW-0723">Serine/threonine-protein kinase</keyword>
<keyword id="KW-0808">Transferase</keyword>
<sequence>MGNGSVKPKHSKHPDGQSGNLSNEALRSKVAELEREVKRKDAELQEREYHLKELREQLAKQTVAIAELTEELQSKCIQLNKLQDVIHVQGGSPLQASPDKVPLDVHRKTSGLVSLHSRRGAKAGVSAEPTSRTYDLNKPPEFSFEKARVRKDSSEKKLITDALNKNQFLKRLDPQQIKDMVECMYGRNYQQGSYIVKQGEPGNHIFVLAEGRLEVFQGEKLLSSIPMWTTFGELAILYNCTRTASVKAITNVKTWALDREVFQNIMRRTAQARDEEYRNFLRSVSLLKNLPEDKLTKIIDCLEVEYYDKGDYIIREGEEGSTFFILAKGKVKVTQSTEGHDQPQLIKTLQKGEYFGEKALISDDVRSANIIAEENDVACLVIDRETFNQTVGTFDELQKYLEGYVATLNRDDEKRHAKRSMSSWKLSKALSLEMIQLKEKVARFSSTSPFQNLEIIATLGVGGFGRVELVKVKNENIAFAMKCIRKKHIVDTKQQEHVYSEKRILEELCSPFIVKLYRTFKDNKYVYMLLEACLGGELWSILRDRGSFDEPTSKFCVACVTEAFDYLHRLGIIYRDLKPENLILDADGYLKLVDFGFAKKIGSGQKTWTFCGTPEYVAPEVILNKGHDFSVDFWSLGILVYELLTGNPPFSGIDQMMTYNLILKGIEKMDFPRKITRRPEDLIRRLCRQNPTERLGNLKNGINDIKKHRWLNGFNWEGLKARSLPSPLRRELSGPIDHSYFDKYPPEKGVPPDEMSGWDKDF</sequence>
<evidence type="ECO:0000250" key="1"/>
<evidence type="ECO:0000250" key="2">
    <source>
        <dbReference type="UniProtKB" id="Q13237"/>
    </source>
</evidence>
<evidence type="ECO:0000250" key="3">
    <source>
        <dbReference type="UniProtKB" id="Q61410"/>
    </source>
</evidence>
<evidence type="ECO:0000255" key="4"/>
<evidence type="ECO:0000255" key="5">
    <source>
        <dbReference type="PROSITE-ProRule" id="PRU00159"/>
    </source>
</evidence>
<evidence type="ECO:0000255" key="6">
    <source>
        <dbReference type="PROSITE-ProRule" id="PRU00618"/>
    </source>
</evidence>
<evidence type="ECO:0000255" key="7">
    <source>
        <dbReference type="PROSITE-ProRule" id="PRU10027"/>
    </source>
</evidence>
<evidence type="ECO:0000256" key="8">
    <source>
        <dbReference type="SAM" id="MobiDB-lite"/>
    </source>
</evidence>
<evidence type="ECO:0000269" key="9">
    <source>
    </source>
</evidence>
<evidence type="ECO:0000269" key="10">
    <source>
    </source>
</evidence>
<evidence type="ECO:0000269" key="11">
    <source>
    </source>
</evidence>
<evidence type="ECO:0000269" key="12">
    <source>
    </source>
</evidence>
<evidence type="ECO:0000305" key="13"/>
<evidence type="ECO:0000305" key="14">
    <source>
    </source>
</evidence>
<evidence type="ECO:0000305" key="15">
    <source>
    </source>
</evidence>
<evidence type="ECO:0007744" key="16">
    <source>
    </source>
</evidence>
<evidence type="ECO:0007829" key="17">
    <source>
        <dbReference type="PDB" id="4OJK"/>
    </source>
</evidence>
<comment type="function">
    <text evidence="3 10 12 14">Crucial regulator of intestinal secretion and bone growth (By similarity). Phosphorylates and activates CFTR on the plasma membrane (PubMed:9465038). Plays a key role in intestinal secretion by regulating cGMP-dependent translocation of CFTR in jejunum (Probable). Acts downstream of NMDAR to activate the plasma membrane accumulation of GRIA1/GLUR1 in synapse and increase synaptic plasticity. Phosphorylates GRIA1/GLUR1 at Ser-863 (PubMed:18031684). Acts as regulator of gene expression and activator of the extracellular signal-regulated kinases MAPK3/ERK1 and MAPK1/ERK2 in mechanically stimulated osteoblasts. Under fluid shear stress, mediates ERK activation and subsequent induction of FOS, FOSL1/FRA1, FOSL2/FRA2 and FOSB that play a key role in the osteoblast anabolic response to mechanical stimulation (By similarity).</text>
</comment>
<comment type="catalytic activity">
    <reaction evidence="10">
        <text>L-seryl-[protein] + ATP = O-phospho-L-seryl-[protein] + ADP + H(+)</text>
        <dbReference type="Rhea" id="RHEA:17989"/>
        <dbReference type="Rhea" id="RHEA-COMP:9863"/>
        <dbReference type="Rhea" id="RHEA-COMP:11604"/>
        <dbReference type="ChEBI" id="CHEBI:15378"/>
        <dbReference type="ChEBI" id="CHEBI:29999"/>
        <dbReference type="ChEBI" id="CHEBI:30616"/>
        <dbReference type="ChEBI" id="CHEBI:83421"/>
        <dbReference type="ChEBI" id="CHEBI:456216"/>
        <dbReference type="EC" id="2.7.11.12"/>
    </reaction>
</comment>
<comment type="catalytic activity">
    <reaction evidence="10">
        <text>L-threonyl-[protein] + ATP = O-phospho-L-threonyl-[protein] + ADP + H(+)</text>
        <dbReference type="Rhea" id="RHEA:46608"/>
        <dbReference type="Rhea" id="RHEA-COMP:11060"/>
        <dbReference type="Rhea" id="RHEA-COMP:11605"/>
        <dbReference type="ChEBI" id="CHEBI:15378"/>
        <dbReference type="ChEBI" id="CHEBI:30013"/>
        <dbReference type="ChEBI" id="CHEBI:30616"/>
        <dbReference type="ChEBI" id="CHEBI:61977"/>
        <dbReference type="ChEBI" id="CHEBI:456216"/>
        <dbReference type="EC" id="2.7.11.12"/>
    </reaction>
</comment>
<comment type="activity regulation">
    <text evidence="14">Binding of cGMP results in enzyme activation.</text>
</comment>
<comment type="subunit">
    <text evidence="10">Interacts with GRIA1/GLUR1.</text>
</comment>
<comment type="subcellular location">
    <subcellularLocation>
        <location evidence="2">Apical cell membrane</location>
        <topology evidence="4">Lipid-anchor</topology>
    </subcellularLocation>
    <subcellularLocation>
        <location evidence="12">Cell membrane</location>
        <topology evidence="15">Lipid-anchor</topology>
    </subcellularLocation>
    <text evidence="12">Plasma membrane localization is required for its function in the activation of CFTR.</text>
</comment>
<comment type="tissue specificity">
    <text evidence="9 11">Highly expressed in intestinal mucosa and is 20 times less abundant in brain and kidney (PubMed:7937783). Expressed in jejunum, in the apical domain of the villus epithelium (PubMed:15872007).</text>
</comment>
<comment type="PTM">
    <text evidence="1">Myristoylation mediates membrane localization.</text>
</comment>
<comment type="similarity">
    <text evidence="13">Belongs to the protein kinase superfamily. AGC Ser/Thr protein kinase family. cGMP subfamily.</text>
</comment>
<organism>
    <name type="scientific">Rattus norvegicus</name>
    <name type="common">Rat</name>
    <dbReference type="NCBI Taxonomy" id="10116"/>
    <lineage>
        <taxon>Eukaryota</taxon>
        <taxon>Metazoa</taxon>
        <taxon>Chordata</taxon>
        <taxon>Craniata</taxon>
        <taxon>Vertebrata</taxon>
        <taxon>Euteleostomi</taxon>
        <taxon>Mammalia</taxon>
        <taxon>Eutheria</taxon>
        <taxon>Euarchontoglires</taxon>
        <taxon>Glires</taxon>
        <taxon>Rodentia</taxon>
        <taxon>Myomorpha</taxon>
        <taxon>Muroidea</taxon>
        <taxon>Muridae</taxon>
        <taxon>Murinae</taxon>
        <taxon>Rattus</taxon>
    </lineage>
</organism>
<feature type="initiator methionine" description="Removed">
    <location>
        <position position="1"/>
    </location>
</feature>
<feature type="chain" id="PRO_0000086125" description="cGMP-dependent protein kinase 2">
    <location>
        <begin position="2"/>
        <end position="762"/>
    </location>
</feature>
<feature type="domain" description="Protein kinase" evidence="5">
    <location>
        <begin position="453"/>
        <end position="711"/>
    </location>
</feature>
<feature type="domain" description="AGC-kinase C-terminal" evidence="6">
    <location>
        <begin position="712"/>
        <end position="762"/>
    </location>
</feature>
<feature type="region of interest" description="Disordered" evidence="8">
    <location>
        <begin position="1"/>
        <end position="25"/>
    </location>
</feature>
<feature type="region of interest" description="Disordered" evidence="8">
    <location>
        <begin position="112"/>
        <end position="138"/>
    </location>
</feature>
<feature type="region of interest" description="cGMP-binding, high affinity; cAMP-binding, moderate affinity" evidence="2">
    <location>
        <begin position="168"/>
        <end position="283"/>
    </location>
</feature>
<feature type="region of interest" description="cGMP-binding, high affinity; cAMP-binding, low affinity" evidence="2">
    <location>
        <begin position="286"/>
        <end position="416"/>
    </location>
</feature>
<feature type="region of interest" description="Disordered" evidence="8">
    <location>
        <begin position="740"/>
        <end position="762"/>
    </location>
</feature>
<feature type="active site" description="Proton acceptor" evidence="5 7">
    <location>
        <position position="576"/>
    </location>
</feature>
<feature type="binding site" evidence="2">
    <location>
        <begin position="232"/>
        <end position="235"/>
    </location>
    <ligand>
        <name>3',5'-cyclic GMP</name>
        <dbReference type="ChEBI" id="CHEBI:57746"/>
        <label>1</label>
    </ligand>
</feature>
<feature type="binding site" evidence="2">
    <location>
        <begin position="242"/>
        <end position="243"/>
    </location>
    <ligand>
        <name>3',5'-cyclic GMP</name>
        <dbReference type="ChEBI" id="CHEBI:57746"/>
        <label>1</label>
    </ligand>
</feature>
<feature type="binding site" evidence="2">
    <location>
        <position position="347"/>
    </location>
    <ligand>
        <name>3',5'-cyclic GMP</name>
        <dbReference type="ChEBI" id="CHEBI:57746"/>
        <label>2</label>
    </ligand>
</feature>
<feature type="binding site" evidence="2">
    <location>
        <begin position="356"/>
        <end position="359"/>
    </location>
    <ligand>
        <name>3',5'-cyclic GMP</name>
        <dbReference type="ChEBI" id="CHEBI:57746"/>
        <label>2</label>
    </ligand>
</feature>
<feature type="binding site" evidence="2">
    <location>
        <begin position="366"/>
        <end position="367"/>
    </location>
    <ligand>
        <name>3',5'-cyclic GMP</name>
        <dbReference type="ChEBI" id="CHEBI:57746"/>
        <label>2</label>
    </ligand>
</feature>
<feature type="binding site" evidence="2">
    <location>
        <position position="412"/>
    </location>
    <ligand>
        <name>3',5'-cyclic GMP</name>
        <dbReference type="ChEBI" id="CHEBI:57746"/>
        <label>2</label>
    </ligand>
</feature>
<feature type="binding site" evidence="2">
    <location>
        <position position="415"/>
    </location>
    <ligand>
        <name>3',5'-cyclic GMP</name>
        <dbReference type="ChEBI" id="CHEBI:57746"/>
        <label>2</label>
    </ligand>
</feature>
<feature type="binding site" evidence="5">
    <location>
        <begin position="459"/>
        <end position="467"/>
    </location>
    <ligand>
        <name>ATP</name>
        <dbReference type="ChEBI" id="CHEBI:30616"/>
    </ligand>
</feature>
<feature type="binding site" evidence="5">
    <location>
        <position position="482"/>
    </location>
    <ligand>
        <name>ATP</name>
        <dbReference type="ChEBI" id="CHEBI:30616"/>
    </ligand>
</feature>
<feature type="modified residue" description="Phosphoserine" evidence="16">
    <location>
        <position position="110"/>
    </location>
</feature>
<feature type="modified residue" description="Phosphoserine" evidence="16">
    <location>
        <position position="117"/>
    </location>
</feature>
<feature type="modified residue" description="Phosphoserine" evidence="16">
    <location>
        <position position="431"/>
    </location>
</feature>
<feature type="modified residue" description="Phosphothreonine" evidence="3">
    <location>
        <position position="609"/>
    </location>
</feature>
<feature type="lipid moiety-binding region" description="N-myristoyl glycine" evidence="2">
    <location>
        <position position="2"/>
    </location>
</feature>
<feature type="mutagenesis site" description="Cytosolic localization." evidence="12">
    <original>G</original>
    <variation>A</variation>
    <location>
        <position position="2"/>
    </location>
</feature>
<feature type="helix" evidence="17">
    <location>
        <begin position="48"/>
        <end position="80"/>
    </location>
</feature>